<organism>
    <name type="scientific">Mycobacterium tuberculosis (strain ATCC 25618 / H37Rv)</name>
    <dbReference type="NCBI Taxonomy" id="83332"/>
    <lineage>
        <taxon>Bacteria</taxon>
        <taxon>Bacillati</taxon>
        <taxon>Actinomycetota</taxon>
        <taxon>Actinomycetes</taxon>
        <taxon>Mycobacteriales</taxon>
        <taxon>Mycobacteriaceae</taxon>
        <taxon>Mycobacterium</taxon>
        <taxon>Mycobacterium tuberculosis complex</taxon>
    </lineage>
</organism>
<keyword id="KW-1003">Cell membrane</keyword>
<keyword id="KW-0472">Membrane</keyword>
<keyword id="KW-1185">Reference proteome</keyword>
<keyword id="KW-0812">Transmembrane</keyword>
<keyword id="KW-1133">Transmembrane helix</keyword>
<proteinExistence type="evidence at protein level"/>
<dbReference type="EMBL" id="AL123456">
    <property type="protein sequence ID" value="CCP46308.1"/>
    <property type="status" value="ALT_INIT"/>
    <property type="molecule type" value="Genomic_DNA"/>
</dbReference>
<dbReference type="EMBL" id="CP003248">
    <property type="protein sequence ID" value="AFN51504.1"/>
    <property type="status" value="ALT_INIT"/>
    <property type="molecule type" value="Genomic_DNA"/>
</dbReference>
<dbReference type="EMBL" id="JLDD01000044">
    <property type="protein sequence ID" value="KBJ26626.1"/>
    <property type="status" value="ALT_INIT"/>
    <property type="molecule type" value="Genomic_DNA"/>
</dbReference>
<dbReference type="RefSeq" id="NP_218003.1">
    <property type="nucleotide sequence ID" value="NC_000962.3"/>
</dbReference>
<dbReference type="FunCoup" id="O06349">
    <property type="interactions" value="2"/>
</dbReference>
<dbReference type="STRING" id="83332.Rv3486"/>
<dbReference type="PaxDb" id="83332-Rv3486"/>
<dbReference type="DNASU" id="888276"/>
<dbReference type="GeneID" id="888276"/>
<dbReference type="KEGG" id="mtu:Rv3486"/>
<dbReference type="KEGG" id="mtv:RVBD_3486"/>
<dbReference type="PATRIC" id="fig|83332.111.peg.3883"/>
<dbReference type="TubercuList" id="Rv3486"/>
<dbReference type="eggNOG" id="COG2259">
    <property type="taxonomic scope" value="Bacteria"/>
</dbReference>
<dbReference type="HOGENOM" id="CLU_058421_3_3_11"/>
<dbReference type="InParanoid" id="O06349"/>
<dbReference type="OrthoDB" id="121744at2"/>
<dbReference type="Proteomes" id="UP000001584">
    <property type="component" value="Chromosome"/>
</dbReference>
<dbReference type="GO" id="GO:0005886">
    <property type="term" value="C:plasma membrane"/>
    <property type="evidence" value="ECO:0000318"/>
    <property type="project" value="GO_Central"/>
</dbReference>
<dbReference type="InterPro" id="IPR032808">
    <property type="entry name" value="DoxX"/>
</dbReference>
<dbReference type="InterPro" id="IPR051907">
    <property type="entry name" value="DoxX-like_oxidoreductase"/>
</dbReference>
<dbReference type="PANTHER" id="PTHR33452:SF1">
    <property type="entry name" value="INNER MEMBRANE PROTEIN YPHA-RELATED"/>
    <property type="match status" value="1"/>
</dbReference>
<dbReference type="PANTHER" id="PTHR33452">
    <property type="entry name" value="OXIDOREDUCTASE CATD-RELATED"/>
    <property type="match status" value="1"/>
</dbReference>
<dbReference type="Pfam" id="PF07681">
    <property type="entry name" value="DoxX"/>
    <property type="match status" value="1"/>
</dbReference>
<sequence length="163" mass="17424">MAITGSAAPSWPRLLHAEGPPSVICIRLLVGLVFLSEGIQKFMYPDQLGPGRFERIGIPAATFFADLDGVVEIVCGTLVLLGLLTRVAAVPLLIDMVGAIVLTKLRALQPGGFLGVEGFWGMAHAARTDLSMLLGLIFLLWSGPGRWSLDRRLSKRATACGAR</sequence>
<accession>O06349</accession>
<accession>F2GJ50</accession>
<accession>I6XHC7</accession>
<reference key="1">
    <citation type="journal article" date="1998" name="Nature">
        <title>Deciphering the biology of Mycobacterium tuberculosis from the complete genome sequence.</title>
        <authorList>
            <person name="Cole S.T."/>
            <person name="Brosch R."/>
            <person name="Parkhill J."/>
            <person name="Garnier T."/>
            <person name="Churcher C.M."/>
            <person name="Harris D.E."/>
            <person name="Gordon S.V."/>
            <person name="Eiglmeier K."/>
            <person name="Gas S."/>
            <person name="Barry C.E. III"/>
            <person name="Tekaia F."/>
            <person name="Badcock K."/>
            <person name="Basham D."/>
            <person name="Brown D."/>
            <person name="Chillingworth T."/>
            <person name="Connor R."/>
            <person name="Davies R.M."/>
            <person name="Devlin K."/>
            <person name="Feltwell T."/>
            <person name="Gentles S."/>
            <person name="Hamlin N."/>
            <person name="Holroyd S."/>
            <person name="Hornsby T."/>
            <person name="Jagels K."/>
            <person name="Krogh A."/>
            <person name="McLean J."/>
            <person name="Moule S."/>
            <person name="Murphy L.D."/>
            <person name="Oliver S."/>
            <person name="Osborne J."/>
            <person name="Quail M.A."/>
            <person name="Rajandream M.A."/>
            <person name="Rogers J."/>
            <person name="Rutter S."/>
            <person name="Seeger K."/>
            <person name="Skelton S."/>
            <person name="Squares S."/>
            <person name="Squares R."/>
            <person name="Sulston J.E."/>
            <person name="Taylor K."/>
            <person name="Whitehead S."/>
            <person name="Barrell B.G."/>
        </authorList>
    </citation>
    <scope>NUCLEOTIDE SEQUENCE [LARGE SCALE GENOMIC DNA]</scope>
    <source>
        <strain>ATCC 25618 / H37Rv</strain>
    </source>
</reference>
<reference key="2">
    <citation type="submission" date="2013-11" db="EMBL/GenBank/DDBJ databases">
        <title>The genome sequence of Mycobacterium tuberculosis H37Rv.</title>
        <authorList>
            <consortium name="The Broad Institute Genome Sequencing Platform"/>
            <person name="Galagan J."/>
            <person name="Kreiswirth B."/>
            <person name="Dobos K."/>
            <person name="Fortune S."/>
            <person name="Fitzgerald M."/>
            <person name="Young S.K."/>
            <person name="Zeng Q."/>
            <person name="Gargeya S."/>
            <person name="Abouelleil A."/>
            <person name="Alvarado L."/>
            <person name="Berlin A.M."/>
            <person name="Chapman S.B."/>
            <person name="Gainer-Dewar J."/>
            <person name="Goldberg J."/>
            <person name="Gnerre S."/>
            <person name="Griggs A."/>
            <person name="Gujja S."/>
            <person name="Hansen M."/>
            <person name="Howarth C."/>
            <person name="Imamovic A."/>
            <person name="Larimer J."/>
            <person name="McCowan C."/>
            <person name="Murphy C."/>
            <person name="Pearson M."/>
            <person name="Poon T."/>
            <person name="Priest M."/>
            <person name="Roberts A."/>
            <person name="Saif S."/>
            <person name="Shea T."/>
            <person name="Sykes S."/>
            <person name="Wortman J."/>
            <person name="Nusbaum C."/>
            <person name="Birren B."/>
        </authorList>
    </citation>
    <scope>NUCLEOTIDE SEQUENCE [LARGE SCALE GENOMIC DNA]</scope>
    <source>
        <strain>ATCC 25618 / H37Rv</strain>
    </source>
</reference>
<reference key="3">
    <citation type="submission" date="2014-04" db="EMBL/GenBank/DDBJ databases">
        <title>The genome sequence of Mycobacterium tuberculosis H37Rv.</title>
        <authorList>
            <consortium name="The Broad Institute Genomics Platform"/>
            <consortium name="The Broad Institute Genome Sequencing Center for Infectious Disease"/>
            <person name="Earl A.M."/>
            <person name="Kreiswirth B."/>
            <person name="Gomez J."/>
            <person name="Victor T."/>
            <person name="Desjardins C."/>
            <person name="Abeel T."/>
            <person name="Young S."/>
            <person name="Zeng Q."/>
            <person name="Gargeya S."/>
            <person name="Abouelleil A."/>
            <person name="Alvarado L."/>
            <person name="Chapman S.B."/>
            <person name="Gainer-Dewar J."/>
            <person name="Goldberg J."/>
            <person name="Griggs A."/>
            <person name="Gujja S."/>
            <person name="Hansen M."/>
            <person name="Howarth C."/>
            <person name="Imamovic A."/>
            <person name="Larimer J."/>
            <person name="Murphy C."/>
            <person name="Naylor J."/>
            <person name="Pearson M."/>
            <person name="Poon T.W."/>
            <person name="Priest M."/>
            <person name="Roberts A."/>
            <person name="Saif S."/>
            <person name="Shea T."/>
            <person name="Sykes S."/>
            <person name="Wortman J."/>
            <person name="Nusbaum C."/>
            <person name="Birren B."/>
        </authorList>
    </citation>
    <scope>NUCLEOTIDE SEQUENCE [LARGE SCALE GENOMIC DNA]</scope>
    <source>
        <strain>ATCC 25618 / H37Rv</strain>
    </source>
</reference>
<reference key="4">
    <citation type="journal article" date="2011" name="Mol. Cell. Proteomics">
        <title>Proteogenomic analysis of Mycobacterium tuberculosis by high resolution mass spectrometry.</title>
        <authorList>
            <person name="Kelkar D.S."/>
            <person name="Kumar D."/>
            <person name="Kumar P."/>
            <person name="Balakrishnan L."/>
            <person name="Muthusamy B."/>
            <person name="Yadav A.K."/>
            <person name="Shrivastava P."/>
            <person name="Marimuthu A."/>
            <person name="Anand S."/>
            <person name="Sundaram H."/>
            <person name="Kingsbury R."/>
            <person name="Harsha H.C."/>
            <person name="Nair B."/>
            <person name="Prasad T.S."/>
            <person name="Chauhan D.S."/>
            <person name="Katoch K."/>
            <person name="Katoch V.M."/>
            <person name="Kumar P."/>
            <person name="Chaerkady R."/>
            <person name="Ramachandran S."/>
            <person name="Dash D."/>
            <person name="Pandey A."/>
        </authorList>
    </citation>
    <scope>IDENTIFICATION BY MASS SPECTROMETRY [LARGE SCALE ANALYSIS]</scope>
    <source>
        <strain>ATCC 25618 / H37Rv</strain>
    </source>
</reference>
<gene>
    <name evidence="4" type="ordered locus">Rv3486</name>
    <name evidence="3" type="ordered locus">RVBD_3486</name>
    <name evidence="5" type="ORF">P425_03628</name>
</gene>
<comment type="subcellular location">
    <subcellularLocation>
        <location evidence="1">Cell membrane</location>
        <topology evidence="1">Multi-pass membrane protein</topology>
    </subcellularLocation>
</comment>
<comment type="similarity">
    <text evidence="2">Belongs to the DoxX family.</text>
</comment>
<comment type="sequence caution">
    <conflict type="erroneous initiation">
        <sequence resource="EMBL-CDS" id="AFN51504"/>
    </conflict>
    <text>Truncated N-terminus.</text>
</comment>
<comment type="sequence caution">
    <conflict type="erroneous initiation">
        <sequence resource="EMBL-CDS" id="CCP46308"/>
    </conflict>
    <text>Truncated N-terminus.</text>
</comment>
<comment type="sequence caution">
    <conflict type="erroneous initiation">
        <sequence resource="EMBL-CDS" id="KBJ26626"/>
    </conflict>
    <text>Truncated N-terminus.</text>
</comment>
<feature type="chain" id="PRO_0000432510" description="Uncharacterized membrane protein Rv3486">
    <location>
        <begin position="1"/>
        <end position="163"/>
    </location>
</feature>
<feature type="transmembrane region" description="Helical" evidence="1">
    <location>
        <begin position="19"/>
        <end position="39"/>
    </location>
</feature>
<feature type="transmembrane region" description="Helical" evidence="1">
    <location>
        <begin position="63"/>
        <end position="83"/>
    </location>
</feature>
<feature type="transmembrane region" description="Helical" evidence="1">
    <location>
        <begin position="87"/>
        <end position="107"/>
    </location>
</feature>
<feature type="transmembrane region" description="Helical" evidence="1">
    <location>
        <begin position="119"/>
        <end position="139"/>
    </location>
</feature>
<protein>
    <recommendedName>
        <fullName>Uncharacterized membrane protein Rv3486</fullName>
    </recommendedName>
</protein>
<evidence type="ECO:0000255" key="1"/>
<evidence type="ECO:0000305" key="2"/>
<evidence type="ECO:0000312" key="3">
    <source>
        <dbReference type="EMBL" id="AFN51504.1"/>
    </source>
</evidence>
<evidence type="ECO:0000312" key="4">
    <source>
        <dbReference type="EMBL" id="CCP46308.1"/>
    </source>
</evidence>
<evidence type="ECO:0000312" key="5">
    <source>
        <dbReference type="EMBL" id="KBJ26626.1"/>
    </source>
</evidence>
<name>Y3486_MYCTU</name>